<keyword id="KW-0002">3D-structure</keyword>
<keyword id="KW-0287">Flowering</keyword>
<keyword id="KW-0408">Iron</keyword>
<keyword id="KW-0479">Metal-binding</keyword>
<keyword id="KW-0539">Nucleus</keyword>
<keyword id="KW-0560">Oxidoreductase</keyword>
<keyword id="KW-1185">Reference proteome</keyword>
<keyword id="KW-0678">Repressor</keyword>
<keyword id="KW-0804">Transcription</keyword>
<keyword id="KW-0805">Transcription regulation</keyword>
<keyword id="KW-0862">Zinc</keyword>
<keyword id="KW-0863">Zinc-finger</keyword>
<accession>F4KIX0</accession>
<accession>Q9FJS0</accession>
<organism>
    <name type="scientific">Arabidopsis thaliana</name>
    <name type="common">Mouse-ear cress</name>
    <dbReference type="NCBI Taxonomy" id="3702"/>
    <lineage>
        <taxon>Eukaryota</taxon>
        <taxon>Viridiplantae</taxon>
        <taxon>Streptophyta</taxon>
        <taxon>Embryophyta</taxon>
        <taxon>Tracheophyta</taxon>
        <taxon>Spermatophyta</taxon>
        <taxon>Magnoliopsida</taxon>
        <taxon>eudicotyledons</taxon>
        <taxon>Gunneridae</taxon>
        <taxon>Pentapetalae</taxon>
        <taxon>rosids</taxon>
        <taxon>malvids</taxon>
        <taxon>Brassicales</taxon>
        <taxon>Brassicaceae</taxon>
        <taxon>Camelineae</taxon>
        <taxon>Arabidopsis</taxon>
    </lineage>
</organism>
<gene>
    <name evidence="11 12" type="primary">JMJ13</name>
    <name evidence="15" type="ordered locus">At5g46910</name>
    <name evidence="16" type="ORF">MQD22.4</name>
</gene>
<proteinExistence type="evidence at protein level"/>
<feature type="chain" id="PRO_0000456188" description="Lysine-specific demethylase JMJ13">
    <location>
        <begin position="1"/>
        <end position="787"/>
    </location>
</feature>
<feature type="domain" description="JmjN" evidence="3">
    <location>
        <begin position="103"/>
        <end position="144"/>
    </location>
</feature>
<feature type="domain" description="JmjC" evidence="4">
    <location>
        <begin position="250"/>
        <end position="420"/>
    </location>
</feature>
<feature type="domain" description="FYR N-terminal" evidence="6">
    <location>
        <begin position="617"/>
        <end position="675"/>
    </location>
</feature>
<feature type="domain" description="FYR C-terminal" evidence="7">
    <location>
        <begin position="677"/>
        <end position="756"/>
    </location>
</feature>
<feature type="zinc finger region" description="C4HCHC" evidence="10 17 18">
    <location>
        <begin position="500"/>
        <end position="551"/>
    </location>
</feature>
<feature type="zinc finger region" description="C5HC2" evidence="2">
    <location>
        <begin position="500"/>
        <end position="551"/>
    </location>
</feature>
<feature type="region of interest" description="Disordered" evidence="8">
    <location>
        <begin position="712"/>
        <end position="769"/>
    </location>
</feature>
<feature type="short sequence motif" description="Nuclear localization signal" evidence="5">
    <location>
        <begin position="752"/>
        <end position="759"/>
    </location>
</feature>
<feature type="binding site" evidence="4 14 17 18">
    <location>
        <position position="293"/>
    </location>
    <ligand>
        <name>Fe cation</name>
        <dbReference type="ChEBI" id="CHEBI:24875"/>
        <note>catalytic</note>
    </ligand>
</feature>
<feature type="binding site" evidence="4 14 17 18">
    <location>
        <position position="295"/>
    </location>
    <ligand>
        <name>Fe cation</name>
        <dbReference type="ChEBI" id="CHEBI:24875"/>
        <note>catalytic</note>
    </ligand>
</feature>
<feature type="binding site" evidence="4 14 17 18">
    <location>
        <position position="388"/>
    </location>
    <ligand>
        <name>Fe cation</name>
        <dbReference type="ChEBI" id="CHEBI:24875"/>
        <note>catalytic</note>
    </ligand>
</feature>
<feature type="binding site" evidence="10 17 18">
    <location>
        <position position="500"/>
    </location>
    <ligand>
        <name>Zn(2+)</name>
        <dbReference type="ChEBI" id="CHEBI:29105"/>
        <label>1</label>
    </ligand>
</feature>
<feature type="binding site" evidence="10 17 18">
    <location>
        <position position="503"/>
    </location>
    <ligand>
        <name>Zn(2+)</name>
        <dbReference type="ChEBI" id="CHEBI:29105"/>
        <label>1</label>
    </ligand>
</feature>
<feature type="binding site" evidence="10 17 18">
    <location>
        <position position="514"/>
    </location>
    <ligand>
        <name>Zn(2+)</name>
        <dbReference type="ChEBI" id="CHEBI:29105"/>
        <label>2</label>
    </ligand>
</feature>
<feature type="binding site" evidence="10 17 18">
    <location>
        <position position="516"/>
    </location>
    <ligand>
        <name>Zn(2+)</name>
        <dbReference type="ChEBI" id="CHEBI:29105"/>
        <label>2</label>
    </ligand>
</feature>
<feature type="binding site" evidence="10 17 18">
    <location>
        <position position="519"/>
    </location>
    <ligand>
        <name>Zn(2+)</name>
        <dbReference type="ChEBI" id="CHEBI:29105"/>
        <label>2</label>
    </ligand>
</feature>
<feature type="binding site" evidence="10 17 18">
    <location>
        <position position="522"/>
    </location>
    <ligand>
        <name>Zn(2+)</name>
        <dbReference type="ChEBI" id="CHEBI:29105"/>
        <label>1</label>
    </ligand>
</feature>
<feature type="binding site" evidence="10 17 18">
    <location>
        <position position="525"/>
    </location>
    <ligand>
        <name>Zn(2+)</name>
        <dbReference type="ChEBI" id="CHEBI:29105"/>
        <label>1</label>
    </ligand>
</feature>
<feature type="binding site" evidence="10 17 18">
    <location>
        <position position="534"/>
    </location>
    <ligand>
        <name>Zn(2+)</name>
        <dbReference type="ChEBI" id="CHEBI:29105"/>
        <label>2</label>
    </ligand>
</feature>
<feature type="site" description="Histone H3 binding" evidence="10 18">
    <location>
        <position position="179"/>
    </location>
</feature>
<feature type="site" description="Histone H3 binding" evidence="10 18">
    <location>
        <position position="236"/>
    </location>
</feature>
<feature type="site" description="Histone H3 binding" evidence="10 18">
    <location>
        <position position="282"/>
    </location>
</feature>
<feature type="site" description="Histone H3 binding" evidence="10 18">
    <location>
        <position position="296"/>
    </location>
</feature>
<feature type="site" description="Histone H3 binding" evidence="10 18">
    <location>
        <position position="402"/>
    </location>
</feature>
<feature type="mutagenesis site" description="Strongly reduced demethylase activity." evidence="10">
    <original>F</original>
    <variation>N</variation>
    <location>
        <position position="179"/>
    </location>
</feature>
<feature type="mutagenesis site" description="Slightly reduced demethylase activity." evidence="10">
    <original>F</original>
    <variation>S</variation>
    <location>
        <position position="179"/>
    </location>
</feature>
<feature type="mutagenesis site" description="Impaired demethylase activity." evidence="10">
    <original>D</original>
    <variation>A</variation>
    <location>
        <position position="236"/>
    </location>
</feature>
<feature type="mutagenesis site" description="Impaired demethylase activity." evidence="10">
    <original>Y</original>
    <variation>A</variation>
    <location>
        <position position="282"/>
    </location>
</feature>
<feature type="mutagenesis site" description="Impaired demethylase activity." evidence="10">
    <original>E</original>
    <variation>A</variation>
    <location>
        <position position="295"/>
    </location>
</feature>
<feature type="mutagenesis site" description="Impaired demethylase activity." evidence="10">
    <original>D</original>
    <variation>A</variation>
    <location>
        <position position="296"/>
    </location>
</feature>
<feature type="mutagenesis site" description="Impaired demethylase activity." evidence="10">
    <original>H</original>
    <variation>A</variation>
    <location>
        <position position="388"/>
    </location>
</feature>
<feature type="mutagenesis site" description="Impaired demethylase activity." evidence="10">
    <original>N</original>
    <variation>A</variation>
    <location>
        <position position="402"/>
    </location>
</feature>
<feature type="sequence conflict" description="In Ref. 1; BAB10230." evidence="13" ref="1">
    <original>Y</original>
    <variation>YQ</variation>
    <location>
        <position position="639"/>
    </location>
</feature>
<feature type="helix" evidence="19">
    <location>
        <begin position="96"/>
        <end position="99"/>
    </location>
</feature>
<feature type="helix" evidence="19">
    <location>
        <begin position="110"/>
        <end position="113"/>
    </location>
</feature>
<feature type="helix" evidence="19">
    <location>
        <begin position="116"/>
        <end position="127"/>
    </location>
</feature>
<feature type="turn" evidence="19">
    <location>
        <begin position="128"/>
        <end position="130"/>
    </location>
</feature>
<feature type="strand" evidence="19">
    <location>
        <begin position="131"/>
        <end position="136"/>
    </location>
</feature>
<feature type="helix" evidence="19">
    <location>
        <begin position="145"/>
        <end position="151"/>
    </location>
</feature>
<feature type="strand" evidence="19">
    <location>
        <begin position="152"/>
        <end position="155"/>
    </location>
</feature>
<feature type="strand" evidence="20">
    <location>
        <begin position="157"/>
        <end position="159"/>
    </location>
</feature>
<feature type="strand" evidence="19">
    <location>
        <begin position="161"/>
        <end position="166"/>
    </location>
</feature>
<feature type="helix" evidence="19">
    <location>
        <begin position="167"/>
        <end position="169"/>
    </location>
</feature>
<feature type="helix" evidence="19">
    <location>
        <begin position="172"/>
        <end position="180"/>
    </location>
</feature>
<feature type="strand" evidence="20">
    <location>
        <begin position="184"/>
        <end position="186"/>
    </location>
</feature>
<feature type="helix" evidence="19">
    <location>
        <begin position="187"/>
        <end position="202"/>
    </location>
</feature>
<feature type="helix" evidence="19">
    <location>
        <begin position="210"/>
        <end position="223"/>
    </location>
</feature>
<feature type="strand" evidence="19">
    <location>
        <begin position="228"/>
        <end position="235"/>
    </location>
</feature>
<feature type="turn" evidence="19">
    <location>
        <begin position="247"/>
        <end position="250"/>
    </location>
</feature>
<feature type="helix" evidence="19">
    <location>
        <begin position="255"/>
        <end position="260"/>
    </location>
</feature>
<feature type="helix" evidence="19">
    <location>
        <begin position="265"/>
        <end position="268"/>
    </location>
</feature>
<feature type="turn" evidence="19">
    <location>
        <begin position="274"/>
        <end position="276"/>
    </location>
</feature>
<feature type="strand" evidence="19">
    <location>
        <begin position="280"/>
        <end position="284"/>
    </location>
</feature>
<feature type="strand" evidence="19">
    <location>
        <begin position="289"/>
        <end position="293"/>
    </location>
</feature>
<feature type="helix" evidence="19">
    <location>
        <begin position="296"/>
        <end position="298"/>
    </location>
</feature>
<feature type="strand" evidence="19">
    <location>
        <begin position="300"/>
        <end position="309"/>
    </location>
</feature>
<feature type="strand" evidence="19">
    <location>
        <begin position="311"/>
        <end position="315"/>
    </location>
</feature>
<feature type="helix" evidence="19">
    <location>
        <begin position="318"/>
        <end position="320"/>
    </location>
</feature>
<feature type="helix" evidence="19">
    <location>
        <begin position="321"/>
        <end position="333"/>
    </location>
</feature>
<feature type="turn" evidence="20">
    <location>
        <begin position="334"/>
        <end position="337"/>
    </location>
</feature>
<feature type="helix" evidence="19">
    <location>
        <begin position="347"/>
        <end position="351"/>
    </location>
</feature>
<feature type="helix" evidence="19">
    <location>
        <begin position="359"/>
        <end position="363"/>
    </location>
</feature>
<feature type="turn" evidence="19">
    <location>
        <begin position="364"/>
        <end position="366"/>
    </location>
</feature>
<feature type="strand" evidence="19">
    <location>
        <begin position="370"/>
        <end position="374"/>
    </location>
</feature>
<feature type="strand" evidence="19">
    <location>
        <begin position="378"/>
        <end position="382"/>
    </location>
</feature>
<feature type="strand" evidence="19">
    <location>
        <begin position="388"/>
        <end position="403"/>
    </location>
</feature>
<feature type="helix" evidence="19">
    <location>
        <begin position="406"/>
        <end position="408"/>
    </location>
</feature>
<feature type="helix" evidence="19">
    <location>
        <begin position="409"/>
        <end position="421"/>
    </location>
</feature>
<feature type="helix" evidence="19">
    <location>
        <begin position="430"/>
        <end position="443"/>
    </location>
</feature>
<feature type="helix" evidence="19">
    <location>
        <begin position="447"/>
        <end position="451"/>
    </location>
</feature>
<feature type="helix" evidence="19">
    <location>
        <begin position="454"/>
        <end position="484"/>
    </location>
</feature>
<feature type="strand" evidence="19">
    <location>
        <begin position="489"/>
        <end position="493"/>
    </location>
</feature>
<feature type="turn" evidence="19">
    <location>
        <begin position="501"/>
        <end position="503"/>
    </location>
</feature>
<feature type="strand" evidence="19">
    <location>
        <begin position="506"/>
        <end position="513"/>
    </location>
</feature>
<feature type="strand" evidence="19">
    <location>
        <begin position="515"/>
        <end position="518"/>
    </location>
</feature>
<feature type="helix" evidence="19">
    <location>
        <begin position="527"/>
        <end position="529"/>
    </location>
</feature>
<feature type="strand" evidence="19">
    <location>
        <begin position="539"/>
        <end position="543"/>
    </location>
</feature>
<feature type="helix" evidence="19">
    <location>
        <begin position="546"/>
        <end position="557"/>
    </location>
</feature>
<dbReference type="EC" id="1.14.11.-" evidence="10"/>
<dbReference type="EMBL" id="AB013394">
    <property type="protein sequence ID" value="BAB10230.1"/>
    <property type="status" value="ALT_SEQ"/>
    <property type="molecule type" value="Genomic_DNA"/>
</dbReference>
<dbReference type="EMBL" id="CP002688">
    <property type="protein sequence ID" value="AED95446.1"/>
    <property type="molecule type" value="Genomic_DNA"/>
</dbReference>
<dbReference type="RefSeq" id="NP_199502.2">
    <property type="nucleotide sequence ID" value="NM_124062.3"/>
</dbReference>
<dbReference type="PDB" id="6IP0">
    <property type="method" value="X-ray"/>
    <property type="resolution" value="2.40 A"/>
    <property type="chains" value="A=90-578"/>
</dbReference>
<dbReference type="PDB" id="6IP4">
    <property type="method" value="X-ray"/>
    <property type="resolution" value="2.60 A"/>
    <property type="chains" value="A=90-578"/>
</dbReference>
<dbReference type="PDBsum" id="6IP0"/>
<dbReference type="PDBsum" id="6IP4"/>
<dbReference type="SMR" id="F4KIX0"/>
<dbReference type="FunCoup" id="F4KIX0">
    <property type="interactions" value="140"/>
</dbReference>
<dbReference type="STRING" id="3702.F4KIX0"/>
<dbReference type="iPTMnet" id="F4KIX0"/>
<dbReference type="PaxDb" id="3702-AT5G46910.1"/>
<dbReference type="ProteomicsDB" id="207848"/>
<dbReference type="EnsemblPlants" id="AT5G46910.1">
    <property type="protein sequence ID" value="AT5G46910.1"/>
    <property type="gene ID" value="AT5G46910"/>
</dbReference>
<dbReference type="GeneID" id="834736"/>
<dbReference type="Gramene" id="AT5G46910.1">
    <property type="protein sequence ID" value="AT5G46910.1"/>
    <property type="gene ID" value="AT5G46910"/>
</dbReference>
<dbReference type="KEGG" id="ath:AT5G46910"/>
<dbReference type="Araport" id="AT5G46910"/>
<dbReference type="TAIR" id="AT5G46910">
    <property type="gene designation" value="JMJ13"/>
</dbReference>
<dbReference type="eggNOG" id="KOG1246">
    <property type="taxonomic scope" value="Eukaryota"/>
</dbReference>
<dbReference type="HOGENOM" id="CLU_016978_0_0_1"/>
<dbReference type="InParanoid" id="F4KIX0"/>
<dbReference type="PRO" id="PR:F4KIX0"/>
<dbReference type="Proteomes" id="UP000006548">
    <property type="component" value="Chromosome 5"/>
</dbReference>
<dbReference type="ExpressionAtlas" id="F4KIX0">
    <property type="expression patterns" value="baseline and differential"/>
</dbReference>
<dbReference type="GO" id="GO:0005634">
    <property type="term" value="C:nucleus"/>
    <property type="evidence" value="ECO:0007669"/>
    <property type="project" value="UniProtKB-SubCell"/>
</dbReference>
<dbReference type="GO" id="GO:0003700">
    <property type="term" value="F:DNA-binding transcription factor activity"/>
    <property type="evidence" value="ECO:0000250"/>
    <property type="project" value="TAIR"/>
</dbReference>
<dbReference type="GO" id="GO:0042393">
    <property type="term" value="F:histone binding"/>
    <property type="evidence" value="ECO:0000314"/>
    <property type="project" value="UniProtKB"/>
</dbReference>
<dbReference type="GO" id="GO:0032452">
    <property type="term" value="F:histone demethylase activity"/>
    <property type="evidence" value="ECO:0000314"/>
    <property type="project" value="TAIR"/>
</dbReference>
<dbReference type="GO" id="GO:0071558">
    <property type="term" value="F:histone H3K27me2/H3K27me3 demethylase activity"/>
    <property type="evidence" value="ECO:0000314"/>
    <property type="project" value="UniProtKB"/>
</dbReference>
<dbReference type="GO" id="GO:0008270">
    <property type="term" value="F:zinc ion binding"/>
    <property type="evidence" value="ECO:0007669"/>
    <property type="project" value="UniProtKB-KW"/>
</dbReference>
<dbReference type="GO" id="GO:0009908">
    <property type="term" value="P:flower development"/>
    <property type="evidence" value="ECO:0007669"/>
    <property type="project" value="UniProtKB-KW"/>
</dbReference>
<dbReference type="GO" id="GO:0048571">
    <property type="term" value="P:long-day photoperiodism"/>
    <property type="evidence" value="ECO:0000270"/>
    <property type="project" value="UniProtKB"/>
</dbReference>
<dbReference type="GO" id="GO:0045814">
    <property type="term" value="P:negative regulation of gene expression, epigenetic"/>
    <property type="evidence" value="ECO:0000315"/>
    <property type="project" value="UniProtKB"/>
</dbReference>
<dbReference type="GO" id="GO:0048579">
    <property type="term" value="P:negative regulation of long-day photoperiodism, flowering"/>
    <property type="evidence" value="ECO:0000315"/>
    <property type="project" value="UniProtKB"/>
</dbReference>
<dbReference type="GO" id="GO:0048577">
    <property type="term" value="P:negative regulation of short-day photoperiodism, flowering"/>
    <property type="evidence" value="ECO:0000315"/>
    <property type="project" value="UniProtKB"/>
</dbReference>
<dbReference type="GO" id="GO:0006355">
    <property type="term" value="P:regulation of DNA-templated transcription"/>
    <property type="evidence" value="ECO:0000304"/>
    <property type="project" value="TAIR"/>
</dbReference>
<dbReference type="GO" id="GO:0009266">
    <property type="term" value="P:response to temperature stimulus"/>
    <property type="evidence" value="ECO:0000315"/>
    <property type="project" value="UniProtKB"/>
</dbReference>
<dbReference type="FunFam" id="2.60.120.650:FF:000016">
    <property type="entry name" value="Lysine-specific demethylase isoform A"/>
    <property type="match status" value="1"/>
</dbReference>
<dbReference type="Gene3D" id="2.60.120.650">
    <property type="entry name" value="Cupin"/>
    <property type="match status" value="1"/>
</dbReference>
<dbReference type="InterPro" id="IPR003347">
    <property type="entry name" value="JmjC_dom"/>
</dbReference>
<dbReference type="InterPro" id="IPR003349">
    <property type="entry name" value="JmjN"/>
</dbReference>
<dbReference type="InterPro" id="IPR004198">
    <property type="entry name" value="Znf_C5HC2"/>
</dbReference>
<dbReference type="PANTHER" id="PTHR10694">
    <property type="entry name" value="LYSINE-SPECIFIC DEMETHYLASE"/>
    <property type="match status" value="1"/>
</dbReference>
<dbReference type="PANTHER" id="PTHR10694:SF33">
    <property type="entry name" value="LYSINE-SPECIFIC DEMETHYLASE 5"/>
    <property type="match status" value="1"/>
</dbReference>
<dbReference type="Pfam" id="PF02373">
    <property type="entry name" value="JmjC"/>
    <property type="match status" value="1"/>
</dbReference>
<dbReference type="Pfam" id="PF02375">
    <property type="entry name" value="JmjN"/>
    <property type="match status" value="1"/>
</dbReference>
<dbReference type="Pfam" id="PF02928">
    <property type="entry name" value="zf-C5HC2"/>
    <property type="match status" value="1"/>
</dbReference>
<dbReference type="SMART" id="SM00558">
    <property type="entry name" value="JmjC"/>
    <property type="match status" value="1"/>
</dbReference>
<dbReference type="SMART" id="SM00545">
    <property type="entry name" value="JmjN"/>
    <property type="match status" value="1"/>
</dbReference>
<dbReference type="SUPFAM" id="SSF51197">
    <property type="entry name" value="Clavaminate synthase-like"/>
    <property type="match status" value="1"/>
</dbReference>
<dbReference type="PROSITE" id="PS51184">
    <property type="entry name" value="JMJC"/>
    <property type="match status" value="1"/>
</dbReference>
<dbReference type="PROSITE" id="PS51183">
    <property type="entry name" value="JMJN"/>
    <property type="match status" value="1"/>
</dbReference>
<reference key="1">
    <citation type="journal article" date="1998" name="DNA Res.">
        <title>Structural analysis of Arabidopsis thaliana chromosome 5. VI. Sequence features of the regions of 1,367,185 bp covered by 19 physically assigned P1 and TAC clones.</title>
        <authorList>
            <person name="Kotani H."/>
            <person name="Nakamura Y."/>
            <person name="Sato S."/>
            <person name="Asamizu E."/>
            <person name="Kaneko T."/>
            <person name="Miyajima N."/>
            <person name="Tabata S."/>
        </authorList>
    </citation>
    <scope>NUCLEOTIDE SEQUENCE [LARGE SCALE GENOMIC DNA]</scope>
    <source>
        <strain>cv. Columbia</strain>
    </source>
</reference>
<reference key="2">
    <citation type="journal article" date="2017" name="Plant J.">
        <title>Araport11: a complete reannotation of the Arabidopsis thaliana reference genome.</title>
        <authorList>
            <person name="Cheng C.Y."/>
            <person name="Krishnakumar V."/>
            <person name="Chan A.P."/>
            <person name="Thibaud-Nissen F."/>
            <person name="Schobel S."/>
            <person name="Town C.D."/>
        </authorList>
    </citation>
    <scope>GENOME REANNOTATION</scope>
    <source>
        <strain>cv. Columbia</strain>
    </source>
</reference>
<reference key="3">
    <citation type="journal article" date="2008" name="J. Integr. Plant Biol.">
        <title>Comparative analysis of JmjC domain-containing proteins reveals the potential histone demethylases in Arabidopsis and rice.</title>
        <authorList>
            <person name="Lu F."/>
            <person name="Li G."/>
            <person name="Cui X."/>
            <person name="Liu C."/>
            <person name="Wang X.-J."/>
            <person name="Cao X."/>
        </authorList>
    </citation>
    <scope>GENE FAMILY</scope>
    <scope>NOMENCLATURE</scope>
    <scope>TISSUE SPECIFICITY</scope>
</reference>
<reference key="4">
    <citation type="journal article" date="2019" name="Nat. Commun.">
        <title>The Arabidopsis H3K27me3 demethylase JUMONJI 13 is a temperature and photoperiod dependent flowering repressor.</title>
        <authorList>
            <person name="Zheng S."/>
            <person name="Hu H."/>
            <person name="Ren H."/>
            <person name="Yang Z."/>
            <person name="Qiu Q."/>
            <person name="Qi W."/>
            <person name="Liu X."/>
            <person name="Chen X."/>
            <person name="Cui X."/>
            <person name="Li S."/>
            <person name="Zhou B."/>
            <person name="Sun D."/>
            <person name="Cao X."/>
            <person name="Du J."/>
        </authorList>
    </citation>
    <scope>X-RAY CRYSTALLOGRAPHY (2.40 ANGSTROMS) OF 90-578 IN COMPLEX WITH HISTONE H3; ZINC AND NICKEL</scope>
    <scope>FUNCTION</scope>
    <scope>MUTAGENESIS OF PHE-179; ASP-236; TYR-282; GLU-295; ASP-296; HIS-388 AND ASN-402</scope>
    <scope>DISRUPTION PHENOTYPE</scope>
    <scope>CATALYTIC ACTIVITY</scope>
    <source>
        <strain>cv. Columbia</strain>
    </source>
</reference>
<evidence type="ECO:0000250" key="1">
    <source>
        <dbReference type="UniProtKB" id="Q8GUI6"/>
    </source>
</evidence>
<evidence type="ECO:0000255" key="2"/>
<evidence type="ECO:0000255" key="3">
    <source>
        <dbReference type="PROSITE-ProRule" id="PRU00537"/>
    </source>
</evidence>
<evidence type="ECO:0000255" key="4">
    <source>
        <dbReference type="PROSITE-ProRule" id="PRU00538"/>
    </source>
</evidence>
<evidence type="ECO:0000255" key="5">
    <source>
        <dbReference type="PROSITE-ProRule" id="PRU00768"/>
    </source>
</evidence>
<evidence type="ECO:0000255" key="6">
    <source>
        <dbReference type="PROSITE-ProRule" id="PRU00875"/>
    </source>
</evidence>
<evidence type="ECO:0000255" key="7">
    <source>
        <dbReference type="PROSITE-ProRule" id="PRU00876"/>
    </source>
</evidence>
<evidence type="ECO:0000256" key="8">
    <source>
        <dbReference type="SAM" id="MobiDB-lite"/>
    </source>
</evidence>
<evidence type="ECO:0000269" key="9">
    <source>
    </source>
</evidence>
<evidence type="ECO:0000269" key="10">
    <source>
    </source>
</evidence>
<evidence type="ECO:0000303" key="11">
    <source>
    </source>
</evidence>
<evidence type="ECO:0000303" key="12">
    <source>
    </source>
</evidence>
<evidence type="ECO:0000305" key="13"/>
<evidence type="ECO:0000305" key="14">
    <source>
    </source>
</evidence>
<evidence type="ECO:0000312" key="15">
    <source>
        <dbReference type="Araport" id="AT5G46910"/>
    </source>
</evidence>
<evidence type="ECO:0000312" key="16">
    <source>
        <dbReference type="EMBL" id="BAB10230.1"/>
    </source>
</evidence>
<evidence type="ECO:0007744" key="17">
    <source>
        <dbReference type="PDB" id="6IP0"/>
    </source>
</evidence>
<evidence type="ECO:0007744" key="18">
    <source>
        <dbReference type="PDB" id="6IP4"/>
    </source>
</evidence>
<evidence type="ECO:0007829" key="19">
    <source>
        <dbReference type="PDB" id="6IP0"/>
    </source>
</evidence>
<evidence type="ECO:0007829" key="20">
    <source>
        <dbReference type="PDB" id="6IP4"/>
    </source>
</evidence>
<protein>
    <recommendedName>
        <fullName evidence="12">Lysine-specific demethylase JMJ13</fullName>
        <ecNumber evidence="10">1.14.11.-</ecNumber>
    </recommendedName>
    <alternativeName>
        <fullName evidence="11 12">Jumonji domain-containing protein 13</fullName>
        <shortName evidence="11">AtJMJ13</shortName>
        <shortName evidence="11 12">Protein JUMONJI 13</shortName>
    </alternativeName>
    <alternativeName>
        <fullName evidence="12">Lysine-specific histone demethylase JMJ13</fullName>
    </alternativeName>
    <alternativeName>
        <fullName evidence="13">[histone H3]-trimethyl-L-lysine(27) monodemethylase JMJ13</fullName>
    </alternativeName>
</protein>
<name>JMJ13_ARATH</name>
<comment type="function">
    <text evidence="10">Histone demethylase that demethylates 'Lys-27' (H3K27me) of histone H3 with a specific activity for H3K27me3 and involved in the regulation of gene expression (PubMed:30899015). Acts as a temperature and photoperiod dependent flowering repressor (PubMed:30899015).</text>
</comment>
<comment type="catalytic activity">
    <reaction evidence="10">
        <text>N(6),N(6),N(6)-trimethyl-L-lysyl(27)-[histone H3] + 2-oxoglutarate + O2 = N(6),N(6)-dimethyl-L-lysyl(27)-[histone H3] + formaldehyde + succinate + CO2</text>
        <dbReference type="Rhea" id="RHEA:60228"/>
        <dbReference type="Rhea" id="RHEA-COMP:15535"/>
        <dbReference type="Rhea" id="RHEA-COMP:15539"/>
        <dbReference type="ChEBI" id="CHEBI:15379"/>
        <dbReference type="ChEBI" id="CHEBI:16526"/>
        <dbReference type="ChEBI" id="CHEBI:16810"/>
        <dbReference type="ChEBI" id="CHEBI:16842"/>
        <dbReference type="ChEBI" id="CHEBI:30031"/>
        <dbReference type="ChEBI" id="CHEBI:61961"/>
        <dbReference type="ChEBI" id="CHEBI:61976"/>
    </reaction>
    <physiologicalReaction direction="left-to-right" evidence="10">
        <dbReference type="Rhea" id="RHEA:60229"/>
    </physiologicalReaction>
</comment>
<comment type="cofactor">
    <cofactor evidence="1">
        <name>Fe(2+)</name>
        <dbReference type="ChEBI" id="CHEBI:29033"/>
    </cofactor>
    <text evidence="1">Binds 1 Fe(2+) ion per subunit.</text>
</comment>
<comment type="subcellular location">
    <subcellularLocation>
        <location evidence="3 5">Nucleus</location>
    </subcellularLocation>
</comment>
<comment type="tissue specificity">
    <text evidence="9">Mostly expressed in leaves, and, to a lower extent, in inflorescences, roots, siliques and stems.</text>
</comment>
<comment type="induction">
    <text evidence="10">Accumulates in response to higher temperature and during long days (at protein level).</text>
</comment>
<comment type="disruption phenotype">
    <text evidence="10">Early flowering in both long and short days conditions, but in a temperature sensitive manner only in short days.</text>
</comment>
<comment type="similarity">
    <text evidence="13">Belongs to the JARID1 histone demethylase family.</text>
</comment>
<comment type="sequence caution" evidence="13">
    <conflict type="erroneous gene model prediction">
        <sequence resource="EMBL-CDS" id="BAB10230"/>
    </conflict>
</comment>
<sequence>MAERRICLSKEAKDGLEFLKRKKLQKMRSDSVNETVGFSTMARSGGDALRPTSASCGMRLRVTSSDTVSKVHGASTVRGGLMKEKVEKLETDDLKWTERLPECPVYRPTKEEFEDPLTYLQKIFPEASKYGICKIVSPLTATVPAGAVLMKEKSNFKFTTRVQPLRLAEWDSDDKVTFFMSGRTYTFRDYEKMANKVFARRYCSGGSLPDSFLEKEFWKEIACGKTETVEYACDVDGSAFSSAPGDPLGSSKWNLNKVSRLPKSTLRLLETSIPGVTEPMLYIGMLFSMFAWHVEDHYLYSINYQHCGASKTWYGIPGSAALKFEKVVKECVYNDDILSTNGEDGAFDVLLGKTTIFPPKTLLDHNVPVYKAVQKPGEFVVTFPRAYHAGFSHGFNCGEAVNFAMGDWFPFGAIASCRYAHLNRVPLLPHEELICKEAMLLNSSSKSENLDLTPTELSGQRSIKTAFVHLIRFLHLARWSLMKSGLCTGLVSNTYGTIVCSLCKRDCYLAFINCECYSHPVCLRHDVKKLDLPCGTTHTLYLRDNIEDMEAAAMKFEKEDGVSDLITTDEDLYKYPSSITLPAAKEDGYTPYSTIYFDFYTEVEMTSHDQLQSGNPVMSYEANASCISSVADDYECSDYVNRRANCSSSSDSKLSEEVACSSSKKTRFFPVVQDEQLVADQESDGSDSECFRVKRRSSLKFENRTVVLDTRESDHHQELKRLKKSHHHEGRYSSSSSVSRQEEEEDELVISNRKETQQQSDVKMQKKRIENHFGGFKRLKVKGLIKP</sequence>